<evidence type="ECO:0000250" key="1">
    <source>
        <dbReference type="UniProtKB" id="P9WQD5"/>
    </source>
</evidence>
<evidence type="ECO:0000256" key="2">
    <source>
        <dbReference type="SAM" id="MobiDB-lite"/>
    </source>
</evidence>
<evidence type="ECO:0000305" key="3"/>
<feature type="chain" id="PRO_0000426795" description="Thioesterase TesA">
    <location>
        <begin position="1"/>
        <end position="261"/>
    </location>
</feature>
<feature type="region of interest" description="Disordered" evidence="2">
    <location>
        <begin position="1"/>
        <end position="24"/>
    </location>
</feature>
<feature type="active site" evidence="1">
    <location>
        <position position="104"/>
    </location>
</feature>
<feature type="active site" evidence="1">
    <location>
        <position position="208"/>
    </location>
</feature>
<feature type="active site" evidence="1">
    <location>
        <position position="236"/>
    </location>
</feature>
<protein>
    <recommendedName>
        <fullName evidence="1">Thioesterase TesA</fullName>
        <ecNumber evidence="1">3.1.2.-</ecNumber>
    </recommendedName>
</protein>
<keyword id="KW-0378">Hydrolase</keyword>
<keyword id="KW-0444">Lipid biosynthesis</keyword>
<keyword id="KW-0443">Lipid metabolism</keyword>
<keyword id="KW-1185">Reference proteome</keyword>
<keyword id="KW-0843">Virulence</keyword>
<name>TESA_MYCTO</name>
<gene>
    <name type="primary">tesA</name>
    <name type="ordered locus">MT2998</name>
</gene>
<comment type="function">
    <text evidence="1">Involved in the synthesis of both phthiocerol dimycocerosates (PDIMs) and phenolic glycolipids (PGLs), which are structurally related lipids non-covalently bound to the outer cell wall layer of M.tuberculosis and are important virulence factors.</text>
</comment>
<comment type="catalytic activity">
    <reaction evidence="1">
        <text>a fatty acyl-CoA + H2O = a fatty acid + CoA + H(+)</text>
        <dbReference type="Rhea" id="RHEA:16781"/>
        <dbReference type="ChEBI" id="CHEBI:15377"/>
        <dbReference type="ChEBI" id="CHEBI:15378"/>
        <dbReference type="ChEBI" id="CHEBI:28868"/>
        <dbReference type="ChEBI" id="CHEBI:57287"/>
        <dbReference type="ChEBI" id="CHEBI:77636"/>
    </reaction>
</comment>
<comment type="similarity">
    <text evidence="3">Belongs to the thioesterase family.</text>
</comment>
<comment type="sequence caution" evidence="3">
    <conflict type="erroneous initiation">
        <sequence resource="EMBL-CDS" id="AAK47325"/>
    </conflict>
</comment>
<proteinExistence type="inferred from homology"/>
<sequence length="261" mass="29152">MLARHGPRYGGSVNGHSDDSSGDAKQAAPTLYIFPHAGGTAKDYVAFSREFSADVKRIAVQYPGQHDRSGLPPLESIPTLADEIFAMMKPSARIDDPVAFFGHSMGGMLAFEVALRYQSAGHRVLAFFVSACSAPGHIRYKQLQDLSDREMLDLFTRMTGMNPDFFTDDEFFVGALPTLRAVRAIAGYSCPPETKLSCPIYAFIGDKDWIATQDDMDPWRDRTTEEFSIRVFPGDHFYLNDNLPELVSDIEDKTLQWHDRA</sequence>
<accession>P9WQD4</accession>
<accession>L0TBA2</accession>
<accession>P63460</accession>
<accession>Q10974</accession>
<reference key="1">
    <citation type="journal article" date="2002" name="J. Bacteriol.">
        <title>Whole-genome comparison of Mycobacterium tuberculosis clinical and laboratory strains.</title>
        <authorList>
            <person name="Fleischmann R.D."/>
            <person name="Alland D."/>
            <person name="Eisen J.A."/>
            <person name="Carpenter L."/>
            <person name="White O."/>
            <person name="Peterson J.D."/>
            <person name="DeBoy R.T."/>
            <person name="Dodson R.J."/>
            <person name="Gwinn M.L."/>
            <person name="Haft D.H."/>
            <person name="Hickey E.K."/>
            <person name="Kolonay J.F."/>
            <person name="Nelson W.C."/>
            <person name="Umayam L.A."/>
            <person name="Ermolaeva M.D."/>
            <person name="Salzberg S.L."/>
            <person name="Delcher A."/>
            <person name="Utterback T.R."/>
            <person name="Weidman J.F."/>
            <person name="Khouri H.M."/>
            <person name="Gill J."/>
            <person name="Mikula A."/>
            <person name="Bishai W."/>
            <person name="Jacobs W.R. Jr."/>
            <person name="Venter J.C."/>
            <person name="Fraser C.M."/>
        </authorList>
    </citation>
    <scope>NUCLEOTIDE SEQUENCE [LARGE SCALE GENOMIC DNA]</scope>
    <source>
        <strain>CDC 1551 / Oshkosh</strain>
    </source>
</reference>
<organism>
    <name type="scientific">Mycobacterium tuberculosis (strain CDC 1551 / Oshkosh)</name>
    <dbReference type="NCBI Taxonomy" id="83331"/>
    <lineage>
        <taxon>Bacteria</taxon>
        <taxon>Bacillati</taxon>
        <taxon>Actinomycetota</taxon>
        <taxon>Actinomycetes</taxon>
        <taxon>Mycobacteriales</taxon>
        <taxon>Mycobacteriaceae</taxon>
        <taxon>Mycobacterium</taxon>
        <taxon>Mycobacterium tuberculosis complex</taxon>
    </lineage>
</organism>
<dbReference type="EC" id="3.1.2.-" evidence="1"/>
<dbReference type="EMBL" id="AE000516">
    <property type="protein sequence ID" value="AAK47325.1"/>
    <property type="status" value="ALT_INIT"/>
    <property type="molecule type" value="Genomic_DNA"/>
</dbReference>
<dbReference type="PIR" id="H70748">
    <property type="entry name" value="H70748"/>
</dbReference>
<dbReference type="RefSeq" id="WP_003414828.1">
    <property type="nucleotide sequence ID" value="NZ_KK341227.1"/>
</dbReference>
<dbReference type="SMR" id="P9WQD4"/>
<dbReference type="ESTHER" id="myctu-yt28">
    <property type="family name" value="Thioesterase"/>
</dbReference>
<dbReference type="KEGG" id="mtc:MT2998"/>
<dbReference type="PATRIC" id="fig|83331.31.peg.3238"/>
<dbReference type="HOGENOM" id="CLU_070456_1_2_11"/>
<dbReference type="Proteomes" id="UP000001020">
    <property type="component" value="Chromosome"/>
</dbReference>
<dbReference type="GO" id="GO:0047617">
    <property type="term" value="F:fatty acyl-CoA hydrolase activity"/>
    <property type="evidence" value="ECO:0007669"/>
    <property type="project" value="RHEA"/>
</dbReference>
<dbReference type="GO" id="GO:0008610">
    <property type="term" value="P:lipid biosynthetic process"/>
    <property type="evidence" value="ECO:0007669"/>
    <property type="project" value="TreeGrafter"/>
</dbReference>
<dbReference type="Gene3D" id="3.40.50.1820">
    <property type="entry name" value="alpha/beta hydrolase"/>
    <property type="match status" value="1"/>
</dbReference>
<dbReference type="InterPro" id="IPR029058">
    <property type="entry name" value="AB_hydrolase_fold"/>
</dbReference>
<dbReference type="InterPro" id="IPR020802">
    <property type="entry name" value="PKS_thioesterase"/>
</dbReference>
<dbReference type="InterPro" id="IPR012223">
    <property type="entry name" value="TEII"/>
</dbReference>
<dbReference type="InterPro" id="IPR001031">
    <property type="entry name" value="Thioesterase"/>
</dbReference>
<dbReference type="PANTHER" id="PTHR11487:SF0">
    <property type="entry name" value="S-ACYL FATTY ACID SYNTHASE THIOESTERASE, MEDIUM CHAIN"/>
    <property type="match status" value="1"/>
</dbReference>
<dbReference type="PANTHER" id="PTHR11487">
    <property type="entry name" value="THIOESTERASE"/>
    <property type="match status" value="1"/>
</dbReference>
<dbReference type="Pfam" id="PF00975">
    <property type="entry name" value="Thioesterase"/>
    <property type="match status" value="1"/>
</dbReference>
<dbReference type="SMART" id="SM00824">
    <property type="entry name" value="PKS_TE"/>
    <property type="match status" value="1"/>
</dbReference>
<dbReference type="SUPFAM" id="SSF53474">
    <property type="entry name" value="alpha/beta-Hydrolases"/>
    <property type="match status" value="1"/>
</dbReference>